<evidence type="ECO:0000255" key="1">
    <source>
        <dbReference type="HAMAP-Rule" id="MF_00185"/>
    </source>
</evidence>
<sequence>MKKKLIIVVGPTASGKSDLTFKLAQDLKSEIIVCDAYQVYKEISKGINKPEIENLNAIKHHFVNHVSINEVWHIKRFKEEIEELINSNMDKNFILEGGSNLYIDCLINNYQLNELDLTLDYSNLSNDELYEKLQKLDFEESLKISKNNKKRLIQALRIIESNNNTKKSVLDKNNKEPLYDFFLIRMIIDRDILYKKINDRADKMFKNNWREEVEQLIKANGNSMMNTNALKALGYDEIYNSIIENRETNLDLIKQKTRNYAKRQETWIRNKFKIDFNFSNYDQYNELLDKCKAFLNDKK</sequence>
<protein>
    <recommendedName>
        <fullName evidence="1">tRNA dimethylallyltransferase</fullName>
        <ecNumber evidence="1">2.5.1.75</ecNumber>
    </recommendedName>
    <alternativeName>
        <fullName evidence="1">Dimethylallyl diphosphate:tRNA dimethylallyltransferase</fullName>
        <shortName evidence="1">DMAPP:tRNA dimethylallyltransferase</shortName>
        <shortName evidence="1">DMATase</shortName>
    </alternativeName>
    <alternativeName>
        <fullName evidence="1">Isopentenyl-diphosphate:tRNA isopentenyltransferase</fullName>
        <shortName evidence="1">IPP transferase</shortName>
        <shortName evidence="1">IPPT</shortName>
        <shortName evidence="1">IPTase</shortName>
    </alternativeName>
</protein>
<keyword id="KW-0067">ATP-binding</keyword>
<keyword id="KW-0460">Magnesium</keyword>
<keyword id="KW-0547">Nucleotide-binding</keyword>
<keyword id="KW-1185">Reference proteome</keyword>
<keyword id="KW-0808">Transferase</keyword>
<keyword id="KW-0819">tRNA processing</keyword>
<dbReference type="EC" id="2.5.1.75" evidence="1"/>
<dbReference type="EMBL" id="BA000026">
    <property type="protein sequence ID" value="BAC44292.1"/>
    <property type="molecule type" value="Genomic_DNA"/>
</dbReference>
<dbReference type="RefSeq" id="WP_011077326.1">
    <property type="nucleotide sequence ID" value="NC_004432.1"/>
</dbReference>
<dbReference type="SMR" id="Q8CXQ5"/>
<dbReference type="FunCoup" id="Q8CXQ5">
    <property type="interactions" value="247"/>
</dbReference>
<dbReference type="STRING" id="272633.gene:10731619"/>
<dbReference type="KEGG" id="mpe:MYPE5020"/>
<dbReference type="eggNOG" id="COG0324">
    <property type="taxonomic scope" value="Bacteria"/>
</dbReference>
<dbReference type="HOGENOM" id="CLU_032616_0_1_14"/>
<dbReference type="InParanoid" id="Q8CXQ5"/>
<dbReference type="Proteomes" id="UP000002522">
    <property type="component" value="Chromosome"/>
</dbReference>
<dbReference type="GO" id="GO:0005524">
    <property type="term" value="F:ATP binding"/>
    <property type="evidence" value="ECO:0007669"/>
    <property type="project" value="UniProtKB-UniRule"/>
</dbReference>
<dbReference type="GO" id="GO:0052381">
    <property type="term" value="F:tRNA dimethylallyltransferase activity"/>
    <property type="evidence" value="ECO:0007669"/>
    <property type="project" value="UniProtKB-UniRule"/>
</dbReference>
<dbReference type="GO" id="GO:0006400">
    <property type="term" value="P:tRNA modification"/>
    <property type="evidence" value="ECO:0007669"/>
    <property type="project" value="TreeGrafter"/>
</dbReference>
<dbReference type="Gene3D" id="1.10.20.140">
    <property type="match status" value="1"/>
</dbReference>
<dbReference type="Gene3D" id="3.40.50.300">
    <property type="entry name" value="P-loop containing nucleotide triphosphate hydrolases"/>
    <property type="match status" value="1"/>
</dbReference>
<dbReference type="HAMAP" id="MF_00185">
    <property type="entry name" value="IPP_trans"/>
    <property type="match status" value="1"/>
</dbReference>
<dbReference type="InterPro" id="IPR039657">
    <property type="entry name" value="Dimethylallyltransferase"/>
</dbReference>
<dbReference type="InterPro" id="IPR018022">
    <property type="entry name" value="IPT"/>
</dbReference>
<dbReference type="InterPro" id="IPR027417">
    <property type="entry name" value="P-loop_NTPase"/>
</dbReference>
<dbReference type="NCBIfam" id="TIGR00174">
    <property type="entry name" value="miaA"/>
    <property type="match status" value="1"/>
</dbReference>
<dbReference type="PANTHER" id="PTHR11088">
    <property type="entry name" value="TRNA DIMETHYLALLYLTRANSFERASE"/>
    <property type="match status" value="1"/>
</dbReference>
<dbReference type="PANTHER" id="PTHR11088:SF60">
    <property type="entry name" value="TRNA DIMETHYLALLYLTRANSFERASE"/>
    <property type="match status" value="1"/>
</dbReference>
<dbReference type="Pfam" id="PF01715">
    <property type="entry name" value="IPPT"/>
    <property type="match status" value="1"/>
</dbReference>
<dbReference type="SUPFAM" id="SSF52540">
    <property type="entry name" value="P-loop containing nucleoside triphosphate hydrolases"/>
    <property type="match status" value="1"/>
</dbReference>
<name>MIAA_MALP2</name>
<accession>Q8CXQ5</accession>
<comment type="function">
    <text evidence="1">Catalyzes the transfer of a dimethylallyl group onto the adenine at position 37 in tRNAs that read codons beginning with uridine, leading to the formation of N6-(dimethylallyl)adenosine (i(6)A).</text>
</comment>
<comment type="catalytic activity">
    <reaction evidence="1">
        <text>adenosine(37) in tRNA + dimethylallyl diphosphate = N(6)-dimethylallyladenosine(37) in tRNA + diphosphate</text>
        <dbReference type="Rhea" id="RHEA:26482"/>
        <dbReference type="Rhea" id="RHEA-COMP:10162"/>
        <dbReference type="Rhea" id="RHEA-COMP:10375"/>
        <dbReference type="ChEBI" id="CHEBI:33019"/>
        <dbReference type="ChEBI" id="CHEBI:57623"/>
        <dbReference type="ChEBI" id="CHEBI:74411"/>
        <dbReference type="ChEBI" id="CHEBI:74415"/>
        <dbReference type="EC" id="2.5.1.75"/>
    </reaction>
</comment>
<comment type="cofactor">
    <cofactor evidence="1">
        <name>Mg(2+)</name>
        <dbReference type="ChEBI" id="CHEBI:18420"/>
    </cofactor>
</comment>
<comment type="subunit">
    <text evidence="1">Monomer.</text>
</comment>
<comment type="similarity">
    <text evidence="1">Belongs to the IPP transferase family.</text>
</comment>
<feature type="chain" id="PRO_0000377236" description="tRNA dimethylallyltransferase">
    <location>
        <begin position="1"/>
        <end position="299"/>
    </location>
</feature>
<feature type="binding site" evidence="1">
    <location>
        <begin position="10"/>
        <end position="17"/>
    </location>
    <ligand>
        <name>ATP</name>
        <dbReference type="ChEBI" id="CHEBI:30616"/>
    </ligand>
</feature>
<feature type="binding site" evidence="1">
    <location>
        <begin position="12"/>
        <end position="17"/>
    </location>
    <ligand>
        <name>substrate</name>
    </ligand>
</feature>
<feature type="site" description="Interaction with substrate tRNA" evidence="1">
    <location>
        <position position="99"/>
    </location>
</feature>
<gene>
    <name evidence="1" type="primary">miaA</name>
    <name type="ordered locus">MYPE5020</name>
</gene>
<organism>
    <name type="scientific">Malacoplasma penetrans (strain HF-2)</name>
    <name type="common">Mycoplasma penetrans</name>
    <dbReference type="NCBI Taxonomy" id="272633"/>
    <lineage>
        <taxon>Bacteria</taxon>
        <taxon>Bacillati</taxon>
        <taxon>Mycoplasmatota</taxon>
        <taxon>Mycoplasmoidales</taxon>
        <taxon>Mycoplasmoidaceae</taxon>
        <taxon>Malacoplasma</taxon>
    </lineage>
</organism>
<reference key="1">
    <citation type="journal article" date="2002" name="Nucleic Acids Res.">
        <title>The complete genomic sequence of Mycoplasma penetrans, an intracellular bacterial pathogen in humans.</title>
        <authorList>
            <person name="Sasaki Y."/>
            <person name="Ishikawa J."/>
            <person name="Yamashita A."/>
            <person name="Oshima K."/>
            <person name="Kenri T."/>
            <person name="Furuya K."/>
            <person name="Yoshino C."/>
            <person name="Horino A."/>
            <person name="Shiba T."/>
            <person name="Sasaki T."/>
            <person name="Hattori M."/>
        </authorList>
    </citation>
    <scope>NUCLEOTIDE SEQUENCE [LARGE SCALE GENOMIC DNA]</scope>
    <source>
        <strain>HF-2</strain>
    </source>
</reference>
<proteinExistence type="inferred from homology"/>